<protein>
    <recommendedName>
        <fullName evidence="1">YcgL domain-containing protein PFLU_1517</fullName>
    </recommendedName>
</protein>
<dbReference type="EMBL" id="AM181176">
    <property type="protein sequence ID" value="CAY47766.1"/>
    <property type="molecule type" value="Genomic_DNA"/>
</dbReference>
<dbReference type="RefSeq" id="WP_003189597.1">
    <property type="nucleotide sequence ID" value="NC_012660.1"/>
</dbReference>
<dbReference type="SMR" id="C3K5F2"/>
<dbReference type="STRING" id="294.SRM1_01381"/>
<dbReference type="eggNOG" id="COG3100">
    <property type="taxonomic scope" value="Bacteria"/>
</dbReference>
<dbReference type="HOGENOM" id="CLU_155118_2_0_6"/>
<dbReference type="OrthoDB" id="7062382at2"/>
<dbReference type="Gene3D" id="3.10.510.20">
    <property type="entry name" value="YcgL domain"/>
    <property type="match status" value="1"/>
</dbReference>
<dbReference type="HAMAP" id="MF_01866">
    <property type="entry name" value="UPF0745"/>
    <property type="match status" value="1"/>
</dbReference>
<dbReference type="InterPro" id="IPR038068">
    <property type="entry name" value="YcgL-like_sf"/>
</dbReference>
<dbReference type="InterPro" id="IPR027354">
    <property type="entry name" value="YcgL_dom"/>
</dbReference>
<dbReference type="PANTHER" id="PTHR38109">
    <property type="entry name" value="PROTEIN YCGL"/>
    <property type="match status" value="1"/>
</dbReference>
<dbReference type="PANTHER" id="PTHR38109:SF1">
    <property type="entry name" value="PROTEIN YCGL"/>
    <property type="match status" value="1"/>
</dbReference>
<dbReference type="Pfam" id="PF05166">
    <property type="entry name" value="YcgL"/>
    <property type="match status" value="1"/>
</dbReference>
<dbReference type="SUPFAM" id="SSF160191">
    <property type="entry name" value="YcgL-like"/>
    <property type="match status" value="1"/>
</dbReference>
<dbReference type="PROSITE" id="PS51648">
    <property type="entry name" value="YCGL"/>
    <property type="match status" value="1"/>
</dbReference>
<organism>
    <name type="scientific">Pseudomonas fluorescens (strain SBW25)</name>
    <dbReference type="NCBI Taxonomy" id="216595"/>
    <lineage>
        <taxon>Bacteria</taxon>
        <taxon>Pseudomonadati</taxon>
        <taxon>Pseudomonadota</taxon>
        <taxon>Gammaproteobacteria</taxon>
        <taxon>Pseudomonadales</taxon>
        <taxon>Pseudomonadaceae</taxon>
        <taxon>Pseudomonas</taxon>
    </lineage>
</organism>
<feature type="chain" id="PRO_1000216163" description="YcgL domain-containing protein PFLU_1517">
    <location>
        <begin position="1"/>
        <end position="97"/>
    </location>
</feature>
<feature type="domain" description="YcgL" evidence="1">
    <location>
        <begin position="3"/>
        <end position="87"/>
    </location>
</feature>
<reference key="1">
    <citation type="journal article" date="2009" name="Genome Biol.">
        <title>Genomic and genetic analyses of diversity and plant interactions of Pseudomonas fluorescens.</title>
        <authorList>
            <person name="Silby M.W."/>
            <person name="Cerdeno-Tarraga A.M."/>
            <person name="Vernikos G.S."/>
            <person name="Giddens S.R."/>
            <person name="Jackson R.W."/>
            <person name="Preston G.M."/>
            <person name="Zhang X.-X."/>
            <person name="Moon C.D."/>
            <person name="Gehrig S.M."/>
            <person name="Godfrey S.A.C."/>
            <person name="Knight C.G."/>
            <person name="Malone J.G."/>
            <person name="Robinson Z."/>
            <person name="Spiers A.J."/>
            <person name="Harris S."/>
            <person name="Challis G.L."/>
            <person name="Yaxley A.M."/>
            <person name="Harris D."/>
            <person name="Seeger K."/>
            <person name="Murphy L."/>
            <person name="Rutter S."/>
            <person name="Squares R."/>
            <person name="Quail M.A."/>
            <person name="Saunders E."/>
            <person name="Mavromatis K."/>
            <person name="Brettin T.S."/>
            <person name="Bentley S.D."/>
            <person name="Hothersall J."/>
            <person name="Stephens E."/>
            <person name="Thomas C.M."/>
            <person name="Parkhill J."/>
            <person name="Levy S.B."/>
            <person name="Rainey P.B."/>
            <person name="Thomson N.R."/>
        </authorList>
    </citation>
    <scope>NUCLEOTIDE SEQUENCE [LARGE SCALE GENOMIC DNA]</scope>
    <source>
        <strain>SBW25</strain>
    </source>
</reference>
<name>Y1517_PSEFS</name>
<sequence length="97" mass="11429">MKRICSIYRSKKKDGMYLYVLKSDALERVPEPLMEAFGKAHHAFDMVLTPERKLSREDIAVVLENLDKQGYHLQMPPAEDEYIEHLPEELLRRNDPM</sequence>
<gene>
    <name type="ordered locus">PFLU_1517</name>
</gene>
<proteinExistence type="inferred from homology"/>
<accession>C3K5F2</accession>
<evidence type="ECO:0000255" key="1">
    <source>
        <dbReference type="HAMAP-Rule" id="MF_01866"/>
    </source>
</evidence>